<evidence type="ECO:0000255" key="1">
    <source>
        <dbReference type="HAMAP-Rule" id="MF_00134"/>
    </source>
</evidence>
<gene>
    <name evidence="1" type="primary">trpC</name>
    <name type="ordered locus">BAA_1327</name>
</gene>
<sequence length="253" mass="28437">MGTILDKIVNQKKKEVAALYETYTPVKEKRKTRSLVKALEQFTVIAEVKRASPSKGDINLHVDVRKQVKTYEECGAGAVSVLTDGQFFKGSFYDLQTAREESSIPLLCKDFIIDKIQIDRAYEAGADIILLIVAALTKEKLKELYSYVLEKGLEAIVEVHDEQELEIAIQLNPHVIGINNRNLKTFEVDLSQTEKLGKRLNEEKLLWISESGIHSKEDIIRVKRAGAKGVLVGEALMTSSSIHTFFEDCKVNI</sequence>
<keyword id="KW-0028">Amino-acid biosynthesis</keyword>
<keyword id="KW-0057">Aromatic amino acid biosynthesis</keyword>
<keyword id="KW-0210">Decarboxylase</keyword>
<keyword id="KW-0456">Lyase</keyword>
<keyword id="KW-0822">Tryptophan biosynthesis</keyword>
<accession>C3P3T8</accession>
<organism>
    <name type="scientific">Bacillus anthracis (strain A0248)</name>
    <dbReference type="NCBI Taxonomy" id="592021"/>
    <lineage>
        <taxon>Bacteria</taxon>
        <taxon>Bacillati</taxon>
        <taxon>Bacillota</taxon>
        <taxon>Bacilli</taxon>
        <taxon>Bacillales</taxon>
        <taxon>Bacillaceae</taxon>
        <taxon>Bacillus</taxon>
        <taxon>Bacillus cereus group</taxon>
    </lineage>
</organism>
<name>TRPC_BACAA</name>
<dbReference type="EC" id="4.1.1.48" evidence="1"/>
<dbReference type="EMBL" id="CP001598">
    <property type="protein sequence ID" value="ACQ50872.1"/>
    <property type="molecule type" value="Genomic_DNA"/>
</dbReference>
<dbReference type="RefSeq" id="WP_000536721.1">
    <property type="nucleotide sequence ID" value="NC_012659.1"/>
</dbReference>
<dbReference type="SMR" id="C3P3T8"/>
<dbReference type="GeneID" id="45021251"/>
<dbReference type="KEGG" id="bai:BAA_1327"/>
<dbReference type="HOGENOM" id="CLU_034247_2_0_9"/>
<dbReference type="UniPathway" id="UPA00035">
    <property type="reaction ID" value="UER00043"/>
</dbReference>
<dbReference type="GO" id="GO:0004425">
    <property type="term" value="F:indole-3-glycerol-phosphate synthase activity"/>
    <property type="evidence" value="ECO:0007669"/>
    <property type="project" value="UniProtKB-UniRule"/>
</dbReference>
<dbReference type="GO" id="GO:0004640">
    <property type="term" value="F:phosphoribosylanthranilate isomerase activity"/>
    <property type="evidence" value="ECO:0007669"/>
    <property type="project" value="TreeGrafter"/>
</dbReference>
<dbReference type="GO" id="GO:0000162">
    <property type="term" value="P:L-tryptophan biosynthetic process"/>
    <property type="evidence" value="ECO:0007669"/>
    <property type="project" value="UniProtKB-UniRule"/>
</dbReference>
<dbReference type="CDD" id="cd00331">
    <property type="entry name" value="IGPS"/>
    <property type="match status" value="1"/>
</dbReference>
<dbReference type="FunFam" id="3.20.20.70:FF:000024">
    <property type="entry name" value="Indole-3-glycerol phosphate synthase"/>
    <property type="match status" value="1"/>
</dbReference>
<dbReference type="Gene3D" id="3.20.20.70">
    <property type="entry name" value="Aldolase class I"/>
    <property type="match status" value="1"/>
</dbReference>
<dbReference type="HAMAP" id="MF_00134_B">
    <property type="entry name" value="IGPS_B"/>
    <property type="match status" value="1"/>
</dbReference>
<dbReference type="InterPro" id="IPR013785">
    <property type="entry name" value="Aldolase_TIM"/>
</dbReference>
<dbReference type="InterPro" id="IPR045186">
    <property type="entry name" value="Indole-3-glycerol_P_synth"/>
</dbReference>
<dbReference type="InterPro" id="IPR013798">
    <property type="entry name" value="Indole-3-glycerol_P_synth_dom"/>
</dbReference>
<dbReference type="InterPro" id="IPR001468">
    <property type="entry name" value="Indole-3-GlycerolPSynthase_CS"/>
</dbReference>
<dbReference type="InterPro" id="IPR011060">
    <property type="entry name" value="RibuloseP-bd_barrel"/>
</dbReference>
<dbReference type="NCBIfam" id="NF001371">
    <property type="entry name" value="PRK00278.1-3"/>
    <property type="match status" value="1"/>
</dbReference>
<dbReference type="NCBIfam" id="NF001377">
    <property type="entry name" value="PRK00278.2-4"/>
    <property type="match status" value="1"/>
</dbReference>
<dbReference type="PANTHER" id="PTHR22854:SF2">
    <property type="entry name" value="INDOLE-3-GLYCEROL-PHOSPHATE SYNTHASE"/>
    <property type="match status" value="1"/>
</dbReference>
<dbReference type="PANTHER" id="PTHR22854">
    <property type="entry name" value="TRYPTOPHAN BIOSYNTHESIS PROTEIN"/>
    <property type="match status" value="1"/>
</dbReference>
<dbReference type="Pfam" id="PF00218">
    <property type="entry name" value="IGPS"/>
    <property type="match status" value="1"/>
</dbReference>
<dbReference type="SUPFAM" id="SSF51366">
    <property type="entry name" value="Ribulose-phoshate binding barrel"/>
    <property type="match status" value="1"/>
</dbReference>
<dbReference type="PROSITE" id="PS00614">
    <property type="entry name" value="IGPS"/>
    <property type="match status" value="1"/>
</dbReference>
<comment type="catalytic activity">
    <reaction evidence="1">
        <text>1-(2-carboxyphenylamino)-1-deoxy-D-ribulose 5-phosphate + H(+) = (1S,2R)-1-C-(indol-3-yl)glycerol 3-phosphate + CO2 + H2O</text>
        <dbReference type="Rhea" id="RHEA:23476"/>
        <dbReference type="ChEBI" id="CHEBI:15377"/>
        <dbReference type="ChEBI" id="CHEBI:15378"/>
        <dbReference type="ChEBI" id="CHEBI:16526"/>
        <dbReference type="ChEBI" id="CHEBI:58613"/>
        <dbReference type="ChEBI" id="CHEBI:58866"/>
        <dbReference type="EC" id="4.1.1.48"/>
    </reaction>
</comment>
<comment type="pathway">
    <text evidence="1">Amino-acid biosynthesis; L-tryptophan biosynthesis; L-tryptophan from chorismate: step 4/5.</text>
</comment>
<comment type="similarity">
    <text evidence="1">Belongs to the TrpC family.</text>
</comment>
<protein>
    <recommendedName>
        <fullName evidence="1">Indole-3-glycerol phosphate synthase</fullName>
        <shortName evidence="1">IGPS</shortName>
        <ecNumber evidence="1">4.1.1.48</ecNumber>
    </recommendedName>
</protein>
<feature type="chain" id="PRO_1000198764" description="Indole-3-glycerol phosphate synthase">
    <location>
        <begin position="1"/>
        <end position="253"/>
    </location>
</feature>
<proteinExistence type="inferred from homology"/>
<reference key="1">
    <citation type="submission" date="2009-04" db="EMBL/GenBank/DDBJ databases">
        <title>Genome sequence of Bacillus anthracis A0248.</title>
        <authorList>
            <person name="Dodson R.J."/>
            <person name="Munk A.C."/>
            <person name="Bruce D."/>
            <person name="Detter C."/>
            <person name="Tapia R."/>
            <person name="Sutton G."/>
            <person name="Sims D."/>
            <person name="Brettin T."/>
        </authorList>
    </citation>
    <scope>NUCLEOTIDE SEQUENCE [LARGE SCALE GENOMIC DNA]</scope>
    <source>
        <strain>A0248</strain>
    </source>
</reference>